<accession>A8YUR0</accession>
<organism>
    <name type="scientific">Lactobacillus helveticus (strain DPC 4571)</name>
    <dbReference type="NCBI Taxonomy" id="405566"/>
    <lineage>
        <taxon>Bacteria</taxon>
        <taxon>Bacillati</taxon>
        <taxon>Bacillota</taxon>
        <taxon>Bacilli</taxon>
        <taxon>Lactobacillales</taxon>
        <taxon>Lactobacillaceae</taxon>
        <taxon>Lactobacillus</taxon>
    </lineage>
</organism>
<dbReference type="EC" id="3.5.1.88" evidence="1"/>
<dbReference type="EMBL" id="CP000517">
    <property type="protein sequence ID" value="ABX26998.1"/>
    <property type="molecule type" value="Genomic_DNA"/>
</dbReference>
<dbReference type="RefSeq" id="WP_003628072.1">
    <property type="nucleotide sequence ID" value="NC_010080.1"/>
</dbReference>
<dbReference type="SMR" id="A8YUR0"/>
<dbReference type="GeneID" id="83726152"/>
<dbReference type="KEGG" id="lhe:lhv_0879"/>
<dbReference type="eggNOG" id="COG0242">
    <property type="taxonomic scope" value="Bacteria"/>
</dbReference>
<dbReference type="HOGENOM" id="CLU_061901_4_0_9"/>
<dbReference type="Proteomes" id="UP000000790">
    <property type="component" value="Chromosome"/>
</dbReference>
<dbReference type="GO" id="GO:0046872">
    <property type="term" value="F:metal ion binding"/>
    <property type="evidence" value="ECO:0007669"/>
    <property type="project" value="UniProtKB-KW"/>
</dbReference>
<dbReference type="GO" id="GO:0042586">
    <property type="term" value="F:peptide deformylase activity"/>
    <property type="evidence" value="ECO:0007669"/>
    <property type="project" value="UniProtKB-UniRule"/>
</dbReference>
<dbReference type="GO" id="GO:0043686">
    <property type="term" value="P:co-translational protein modification"/>
    <property type="evidence" value="ECO:0007669"/>
    <property type="project" value="TreeGrafter"/>
</dbReference>
<dbReference type="GO" id="GO:0006412">
    <property type="term" value="P:translation"/>
    <property type="evidence" value="ECO:0007669"/>
    <property type="project" value="UniProtKB-UniRule"/>
</dbReference>
<dbReference type="CDD" id="cd00487">
    <property type="entry name" value="Pep_deformylase"/>
    <property type="match status" value="1"/>
</dbReference>
<dbReference type="FunFam" id="3.90.45.10:FF:000002">
    <property type="entry name" value="Peptide deformylase"/>
    <property type="match status" value="1"/>
</dbReference>
<dbReference type="Gene3D" id="3.90.45.10">
    <property type="entry name" value="Peptide deformylase"/>
    <property type="match status" value="1"/>
</dbReference>
<dbReference type="HAMAP" id="MF_00163">
    <property type="entry name" value="Pep_deformylase"/>
    <property type="match status" value="1"/>
</dbReference>
<dbReference type="InterPro" id="IPR023635">
    <property type="entry name" value="Peptide_deformylase"/>
</dbReference>
<dbReference type="InterPro" id="IPR036821">
    <property type="entry name" value="Peptide_deformylase_sf"/>
</dbReference>
<dbReference type="NCBIfam" id="TIGR00079">
    <property type="entry name" value="pept_deformyl"/>
    <property type="match status" value="1"/>
</dbReference>
<dbReference type="PANTHER" id="PTHR10458">
    <property type="entry name" value="PEPTIDE DEFORMYLASE"/>
    <property type="match status" value="1"/>
</dbReference>
<dbReference type="PANTHER" id="PTHR10458:SF8">
    <property type="entry name" value="PEPTIDE DEFORMYLASE 2"/>
    <property type="match status" value="1"/>
</dbReference>
<dbReference type="Pfam" id="PF01327">
    <property type="entry name" value="Pep_deformylase"/>
    <property type="match status" value="1"/>
</dbReference>
<dbReference type="PIRSF" id="PIRSF004749">
    <property type="entry name" value="Pep_def"/>
    <property type="match status" value="1"/>
</dbReference>
<dbReference type="PRINTS" id="PR01576">
    <property type="entry name" value="PDEFORMYLASE"/>
</dbReference>
<dbReference type="SUPFAM" id="SSF56420">
    <property type="entry name" value="Peptide deformylase"/>
    <property type="match status" value="1"/>
</dbReference>
<evidence type="ECO:0000255" key="1">
    <source>
        <dbReference type="HAMAP-Rule" id="MF_00163"/>
    </source>
</evidence>
<reference key="1">
    <citation type="journal article" date="2008" name="J. Bacteriol.">
        <title>Genome sequence of Lactobacillus helveticus: an organism distinguished by selective gene loss and IS element expansion.</title>
        <authorList>
            <person name="Callanan M."/>
            <person name="Kaleta P."/>
            <person name="O'Callaghan J."/>
            <person name="O'Sullivan O."/>
            <person name="Jordan K."/>
            <person name="McAuliffe O."/>
            <person name="Sangrador-Vegas A."/>
            <person name="Slattery L."/>
            <person name="Fitzgerald G.F."/>
            <person name="Beresford T."/>
            <person name="Ross R.P."/>
        </authorList>
    </citation>
    <scope>NUCLEOTIDE SEQUENCE [LARGE SCALE GENOMIC DNA]</scope>
    <source>
        <strain>DPC 4571</strain>
    </source>
</reference>
<proteinExistence type="inferred from homology"/>
<comment type="function">
    <text evidence="1">Removes the formyl group from the N-terminal Met of newly synthesized proteins. Requires at least a dipeptide for an efficient rate of reaction. N-terminal L-methionine is a prerequisite for activity but the enzyme has broad specificity at other positions.</text>
</comment>
<comment type="catalytic activity">
    <reaction evidence="1">
        <text>N-terminal N-formyl-L-methionyl-[peptide] + H2O = N-terminal L-methionyl-[peptide] + formate</text>
        <dbReference type="Rhea" id="RHEA:24420"/>
        <dbReference type="Rhea" id="RHEA-COMP:10639"/>
        <dbReference type="Rhea" id="RHEA-COMP:10640"/>
        <dbReference type="ChEBI" id="CHEBI:15377"/>
        <dbReference type="ChEBI" id="CHEBI:15740"/>
        <dbReference type="ChEBI" id="CHEBI:49298"/>
        <dbReference type="ChEBI" id="CHEBI:64731"/>
        <dbReference type="EC" id="3.5.1.88"/>
    </reaction>
</comment>
<comment type="cofactor">
    <cofactor evidence="1">
        <name>Fe(2+)</name>
        <dbReference type="ChEBI" id="CHEBI:29033"/>
    </cofactor>
    <text evidence="1">Binds 1 Fe(2+) ion.</text>
</comment>
<comment type="similarity">
    <text evidence="1">Belongs to the polypeptide deformylase family.</text>
</comment>
<gene>
    <name evidence="1" type="primary">def</name>
    <name type="ordered locus">lhv_0879</name>
</gene>
<keyword id="KW-0378">Hydrolase</keyword>
<keyword id="KW-0408">Iron</keyword>
<keyword id="KW-0479">Metal-binding</keyword>
<keyword id="KW-0648">Protein biosynthesis</keyword>
<name>DEF_LACH4</name>
<protein>
    <recommendedName>
        <fullName evidence="1">Peptide deformylase</fullName>
        <shortName evidence="1">PDF</shortName>
        <ecNumber evidence="1">3.5.1.88</ecNumber>
    </recommendedName>
    <alternativeName>
        <fullName evidence="1">Polypeptide deformylase</fullName>
    </alternativeName>
</protein>
<feature type="chain" id="PRO_1000071550" description="Peptide deformylase">
    <location>
        <begin position="1"/>
        <end position="184"/>
    </location>
</feature>
<feature type="active site" evidence="1">
    <location>
        <position position="155"/>
    </location>
</feature>
<feature type="binding site" evidence="1">
    <location>
        <position position="111"/>
    </location>
    <ligand>
        <name>Fe cation</name>
        <dbReference type="ChEBI" id="CHEBI:24875"/>
    </ligand>
</feature>
<feature type="binding site" evidence="1">
    <location>
        <position position="154"/>
    </location>
    <ligand>
        <name>Fe cation</name>
        <dbReference type="ChEBI" id="CHEBI:24875"/>
    </ligand>
</feature>
<feature type="binding site" evidence="1">
    <location>
        <position position="158"/>
    </location>
    <ligand>
        <name>Fe cation</name>
        <dbReference type="ChEBI" id="CHEBI:24875"/>
    </ligand>
</feature>
<sequence length="184" mass="20661">MILMKDIVRDGDPVLRQVAKPLTFPLSDHYKQLAEDMMEYLVNSQDPKIAEKHQLRAGVGLAAPQVGEGVQMAALLVPDDKGEIIFKEVYVNPEIVSESVRQACLSEGEGCLSVDKVINGYVPRPDKLTIHYYTVDGEEKTIRLKDYPAIVSSHEIDHLNGHLFYDRINKKEPFALKEDTVVIS</sequence>